<sequence>MLGEQAYLDLCKQIFKTGEQRGDRTNTGTHSIFGHQIRFDLNKGFPLLTTKRVPFRLVASELLWFIKGDTNIRYLLKHNNNIWNEWAFEKWVNSADYQGPDMANFGLRSQKDENFNKQYQEQMELFKTRILEDDSFADKYGDLGSVYGKQWRNWKTTQNETIDQLKDVIHSIKTNPNSRRHIVSAWNPEDIPTMALPPCHTLFQFYVSNGKLSCQLYQRSADVFLGVPFNIASYALLTHLIAHECGLEVGDFVHTFGDAHIYSNHVEQVETQLEREIRDFPQLIINKDKNSIFEMDLDDLVIENYNPHPSIKAPIAV</sequence>
<proteinExistence type="inferred from homology"/>
<feature type="chain" id="PRO_0000140997" description="Thymidylate synthase">
    <location>
        <begin position="1"/>
        <end position="317"/>
    </location>
</feature>
<feature type="active site" description="Nucleophile" evidence="1">
    <location>
        <position position="199"/>
    </location>
</feature>
<feature type="binding site" description="in other chain" evidence="1">
    <location>
        <position position="24"/>
    </location>
    <ligand>
        <name>dUMP</name>
        <dbReference type="ChEBI" id="CHEBI:246422"/>
        <note>ligand shared between dimeric partners</note>
    </ligand>
</feature>
<feature type="binding site" evidence="1">
    <location>
        <begin position="179"/>
        <end position="180"/>
    </location>
    <ligand>
        <name>dUMP</name>
        <dbReference type="ChEBI" id="CHEBI:246422"/>
        <note>ligand shared between dimeric partners</note>
    </ligand>
</feature>
<feature type="binding site" description="in other chain" evidence="1">
    <location>
        <begin position="219"/>
        <end position="222"/>
    </location>
    <ligand>
        <name>dUMP</name>
        <dbReference type="ChEBI" id="CHEBI:246422"/>
        <note>ligand shared between dimeric partners</note>
    </ligand>
</feature>
<feature type="binding site" evidence="1">
    <location>
        <position position="222"/>
    </location>
    <ligand>
        <name>(6R)-5,10-methylene-5,6,7,8-tetrahydrofolate</name>
        <dbReference type="ChEBI" id="CHEBI:15636"/>
    </ligand>
</feature>
<feature type="binding site" description="in other chain" evidence="1">
    <location>
        <position position="230"/>
    </location>
    <ligand>
        <name>dUMP</name>
        <dbReference type="ChEBI" id="CHEBI:246422"/>
        <note>ligand shared between dimeric partners</note>
    </ligand>
</feature>
<feature type="binding site" description="in other chain" evidence="1">
    <location>
        <begin position="260"/>
        <end position="262"/>
    </location>
    <ligand>
        <name>dUMP</name>
        <dbReference type="ChEBI" id="CHEBI:246422"/>
        <note>ligand shared between dimeric partners</note>
    </ligand>
</feature>
<feature type="binding site" evidence="1">
    <location>
        <position position="316"/>
    </location>
    <ligand>
        <name>(6R)-5,10-methylene-5,6,7,8-tetrahydrofolate</name>
        <dbReference type="ChEBI" id="CHEBI:15636"/>
    </ligand>
</feature>
<comment type="function">
    <text evidence="1">Catalyzes the reductive methylation of 2'-deoxyuridine-5'-monophosphate (dUMP) to 2'-deoxythymidine-5'-monophosphate (dTMP) while utilizing 5,10-methylenetetrahydrofolate (mTHF) as the methyl donor and reductant in the reaction, yielding dihydrofolate (DHF) as a by-product. This enzymatic reaction provides an intracellular de novo source of dTMP, an essential precursor for DNA biosynthesis.</text>
</comment>
<comment type="catalytic activity">
    <reaction evidence="1">
        <text>dUMP + (6R)-5,10-methylene-5,6,7,8-tetrahydrofolate = 7,8-dihydrofolate + dTMP</text>
        <dbReference type="Rhea" id="RHEA:12104"/>
        <dbReference type="ChEBI" id="CHEBI:15636"/>
        <dbReference type="ChEBI" id="CHEBI:57451"/>
        <dbReference type="ChEBI" id="CHEBI:63528"/>
        <dbReference type="ChEBI" id="CHEBI:246422"/>
        <dbReference type="EC" id="2.1.1.45"/>
    </reaction>
</comment>
<comment type="pathway">
    <text evidence="1">Pyrimidine metabolism; dTTP biosynthesis.</text>
</comment>
<comment type="subunit">
    <text evidence="1">Homodimer.</text>
</comment>
<comment type="subcellular location">
    <subcellularLocation>
        <location evidence="1">Cytoplasm</location>
    </subcellularLocation>
</comment>
<comment type="similarity">
    <text evidence="1">Belongs to the thymidylate synthase family. Bacterial-type ThyA subfamily.</text>
</comment>
<gene>
    <name evidence="1" type="primary">thyA</name>
    <name type="ordered locus">OB1740</name>
</gene>
<evidence type="ECO:0000255" key="1">
    <source>
        <dbReference type="HAMAP-Rule" id="MF_00008"/>
    </source>
</evidence>
<protein>
    <recommendedName>
        <fullName evidence="1">Thymidylate synthase</fullName>
        <shortName evidence="1">TS</shortName>
        <shortName evidence="1">TSase</shortName>
        <ecNumber evidence="1">2.1.1.45</ecNumber>
    </recommendedName>
</protein>
<accession>Q8EQG0</accession>
<name>TYSY_OCEIH</name>
<reference key="1">
    <citation type="journal article" date="2002" name="Nucleic Acids Res.">
        <title>Genome sequence of Oceanobacillus iheyensis isolated from the Iheya Ridge and its unexpected adaptive capabilities to extreme environments.</title>
        <authorList>
            <person name="Takami H."/>
            <person name="Takaki Y."/>
            <person name="Uchiyama I."/>
        </authorList>
    </citation>
    <scope>NUCLEOTIDE SEQUENCE [LARGE SCALE GENOMIC DNA]</scope>
    <source>
        <strain>DSM 14371 / CIP 107618 / JCM 11309 / KCTC 3954 / HTE831</strain>
    </source>
</reference>
<organism>
    <name type="scientific">Oceanobacillus iheyensis (strain DSM 14371 / CIP 107618 / JCM 11309 / KCTC 3954 / HTE831)</name>
    <dbReference type="NCBI Taxonomy" id="221109"/>
    <lineage>
        <taxon>Bacteria</taxon>
        <taxon>Bacillati</taxon>
        <taxon>Bacillota</taxon>
        <taxon>Bacilli</taxon>
        <taxon>Bacillales</taxon>
        <taxon>Bacillaceae</taxon>
        <taxon>Oceanobacillus</taxon>
    </lineage>
</organism>
<dbReference type="EC" id="2.1.1.45" evidence="1"/>
<dbReference type="EMBL" id="BA000028">
    <property type="protein sequence ID" value="BAC13696.1"/>
    <property type="molecule type" value="Genomic_DNA"/>
</dbReference>
<dbReference type="RefSeq" id="WP_011066140.1">
    <property type="nucleotide sequence ID" value="NC_004193.1"/>
</dbReference>
<dbReference type="SMR" id="Q8EQG0"/>
<dbReference type="STRING" id="221109.gene:10733980"/>
<dbReference type="KEGG" id="oih:OB1740"/>
<dbReference type="eggNOG" id="COG0207">
    <property type="taxonomic scope" value="Bacteria"/>
</dbReference>
<dbReference type="HOGENOM" id="CLU_021669_0_2_9"/>
<dbReference type="OrthoDB" id="9774633at2"/>
<dbReference type="PhylomeDB" id="Q8EQG0"/>
<dbReference type="UniPathway" id="UPA00575"/>
<dbReference type="Proteomes" id="UP000000822">
    <property type="component" value="Chromosome"/>
</dbReference>
<dbReference type="GO" id="GO:0005829">
    <property type="term" value="C:cytosol"/>
    <property type="evidence" value="ECO:0007669"/>
    <property type="project" value="TreeGrafter"/>
</dbReference>
<dbReference type="GO" id="GO:0004799">
    <property type="term" value="F:thymidylate synthase activity"/>
    <property type="evidence" value="ECO:0007669"/>
    <property type="project" value="UniProtKB-UniRule"/>
</dbReference>
<dbReference type="GO" id="GO:0006231">
    <property type="term" value="P:dTMP biosynthetic process"/>
    <property type="evidence" value="ECO:0007669"/>
    <property type="project" value="UniProtKB-UniRule"/>
</dbReference>
<dbReference type="GO" id="GO:0006235">
    <property type="term" value="P:dTTP biosynthetic process"/>
    <property type="evidence" value="ECO:0007669"/>
    <property type="project" value="UniProtKB-UniRule"/>
</dbReference>
<dbReference type="GO" id="GO:0032259">
    <property type="term" value="P:methylation"/>
    <property type="evidence" value="ECO:0007669"/>
    <property type="project" value="UniProtKB-KW"/>
</dbReference>
<dbReference type="CDD" id="cd00351">
    <property type="entry name" value="TS_Pyrimidine_HMase"/>
    <property type="match status" value="1"/>
</dbReference>
<dbReference type="Gene3D" id="3.30.572.10">
    <property type="entry name" value="Thymidylate synthase/dCMP hydroxymethylase domain"/>
    <property type="match status" value="1"/>
</dbReference>
<dbReference type="HAMAP" id="MF_00008">
    <property type="entry name" value="Thymidy_synth_bact"/>
    <property type="match status" value="1"/>
</dbReference>
<dbReference type="InterPro" id="IPR045097">
    <property type="entry name" value="Thymidate_synth/dCMP_Mease"/>
</dbReference>
<dbReference type="InterPro" id="IPR023451">
    <property type="entry name" value="Thymidate_synth/dCMP_Mease_dom"/>
</dbReference>
<dbReference type="InterPro" id="IPR036926">
    <property type="entry name" value="Thymidate_synth/dCMP_Mease_sf"/>
</dbReference>
<dbReference type="InterPro" id="IPR000398">
    <property type="entry name" value="Thymidylate_synthase"/>
</dbReference>
<dbReference type="InterPro" id="IPR020940">
    <property type="entry name" value="Thymidylate_synthase_AS"/>
</dbReference>
<dbReference type="NCBIfam" id="NF002496">
    <property type="entry name" value="PRK01827.1-2"/>
    <property type="match status" value="1"/>
</dbReference>
<dbReference type="NCBIfam" id="TIGR03284">
    <property type="entry name" value="thym_sym"/>
    <property type="match status" value="1"/>
</dbReference>
<dbReference type="PANTHER" id="PTHR11548:SF9">
    <property type="entry name" value="THYMIDYLATE SYNTHASE"/>
    <property type="match status" value="1"/>
</dbReference>
<dbReference type="PANTHER" id="PTHR11548">
    <property type="entry name" value="THYMIDYLATE SYNTHASE 1"/>
    <property type="match status" value="1"/>
</dbReference>
<dbReference type="Pfam" id="PF00303">
    <property type="entry name" value="Thymidylat_synt"/>
    <property type="match status" value="1"/>
</dbReference>
<dbReference type="PRINTS" id="PR00108">
    <property type="entry name" value="THYMDSNTHASE"/>
</dbReference>
<dbReference type="SUPFAM" id="SSF55831">
    <property type="entry name" value="Thymidylate synthase/dCMP hydroxymethylase"/>
    <property type="match status" value="1"/>
</dbReference>
<dbReference type="PROSITE" id="PS00091">
    <property type="entry name" value="THYMIDYLATE_SYNTHASE"/>
    <property type="match status" value="1"/>
</dbReference>
<keyword id="KW-0963">Cytoplasm</keyword>
<keyword id="KW-0489">Methyltransferase</keyword>
<keyword id="KW-0545">Nucleotide biosynthesis</keyword>
<keyword id="KW-1185">Reference proteome</keyword>
<keyword id="KW-0808">Transferase</keyword>